<keyword id="KW-1003">Cell membrane</keyword>
<keyword id="KW-0472">Membrane</keyword>
<keyword id="KW-0732">Signal</keyword>
<keyword id="KW-0812">Transmembrane</keyword>
<keyword id="KW-1133">Transmembrane helix</keyword>
<reference key="1">
    <citation type="journal article" date="2006" name="PLoS Genet.">
        <title>Genome sequence of Rickettsia bellii illuminates the role of amoebae in gene exchanges between intracellular pathogens.</title>
        <authorList>
            <person name="Ogata H."/>
            <person name="La Scola B."/>
            <person name="Audic S."/>
            <person name="Renesto P."/>
            <person name="Blanc G."/>
            <person name="Robert C."/>
            <person name="Fournier P.-E."/>
            <person name="Claverie J.-M."/>
            <person name="Raoult D."/>
        </authorList>
    </citation>
    <scope>NUCLEOTIDE SEQUENCE [LARGE SCALE GENOMIC DNA]</scope>
    <source>
        <strain>RML369-C</strain>
    </source>
</reference>
<comment type="subcellular location">
    <subcellularLocation>
        <location evidence="3">Cell membrane</location>
        <topology evidence="3">Multi-pass membrane protein</topology>
    </subcellularLocation>
</comment>
<comment type="similarity">
    <text evidence="3">Belongs to the TrbL/VirB6 family.</text>
</comment>
<name>Y1264_RICBR</name>
<gene>
    <name type="ordered locus">RBE_1264</name>
</gene>
<protein>
    <recommendedName>
        <fullName>Uncharacterized protein RBE_1264</fullName>
    </recommendedName>
</protein>
<organism>
    <name type="scientific">Rickettsia bellii (strain RML369-C)</name>
    <dbReference type="NCBI Taxonomy" id="336407"/>
    <lineage>
        <taxon>Bacteria</taxon>
        <taxon>Pseudomonadati</taxon>
        <taxon>Pseudomonadota</taxon>
        <taxon>Alphaproteobacteria</taxon>
        <taxon>Rickettsiales</taxon>
        <taxon>Rickettsiaceae</taxon>
        <taxon>Rickettsieae</taxon>
        <taxon>Rickettsia</taxon>
        <taxon>belli group</taxon>
    </lineage>
</organism>
<accession>Q1RH19</accession>
<dbReference type="EMBL" id="CP000087">
    <property type="protein sequence ID" value="ABE05345.1"/>
    <property type="molecule type" value="Genomic_DNA"/>
</dbReference>
<dbReference type="RefSeq" id="WP_011477917.1">
    <property type="nucleotide sequence ID" value="NC_007940.1"/>
</dbReference>
<dbReference type="KEGG" id="rbe:RBE_1264"/>
<dbReference type="eggNOG" id="COG3704">
    <property type="taxonomic scope" value="Bacteria"/>
</dbReference>
<dbReference type="HOGENOM" id="CLU_027273_0_0_5"/>
<dbReference type="OrthoDB" id="7163542at2"/>
<dbReference type="Proteomes" id="UP000001951">
    <property type="component" value="Chromosome"/>
</dbReference>
<dbReference type="GO" id="GO:0005886">
    <property type="term" value="C:plasma membrane"/>
    <property type="evidence" value="ECO:0007669"/>
    <property type="project" value="UniProtKB-SubCell"/>
</dbReference>
<dbReference type="GO" id="GO:0030255">
    <property type="term" value="P:protein secretion by the type IV secretion system"/>
    <property type="evidence" value="ECO:0007669"/>
    <property type="project" value="InterPro"/>
</dbReference>
<dbReference type="InterPro" id="IPR007688">
    <property type="entry name" value="Conjugal_tfr_TrbL/VirB6"/>
</dbReference>
<dbReference type="Pfam" id="PF04610">
    <property type="entry name" value="TrbL"/>
    <property type="match status" value="1"/>
</dbReference>
<evidence type="ECO:0000255" key="1"/>
<evidence type="ECO:0000256" key="2">
    <source>
        <dbReference type="SAM" id="MobiDB-lite"/>
    </source>
</evidence>
<evidence type="ECO:0000305" key="3"/>
<feature type="signal peptide" evidence="1">
    <location>
        <begin position="1"/>
        <end position="24"/>
    </location>
</feature>
<feature type="chain" id="PRO_0000269207" description="Uncharacterized protein RBE_1264">
    <location>
        <begin position="25"/>
        <end position="673"/>
    </location>
</feature>
<feature type="transmembrane region" description="Helical" evidence="1">
    <location>
        <begin position="224"/>
        <end position="244"/>
    </location>
</feature>
<feature type="transmembrane region" description="Helical" evidence="1">
    <location>
        <begin position="253"/>
        <end position="273"/>
    </location>
</feature>
<feature type="transmembrane region" description="Helical" evidence="1">
    <location>
        <begin position="410"/>
        <end position="430"/>
    </location>
</feature>
<feature type="transmembrane region" description="Helical" evidence="1">
    <location>
        <begin position="436"/>
        <end position="456"/>
    </location>
</feature>
<feature type="transmembrane region" description="Helical" evidence="1">
    <location>
        <begin position="469"/>
        <end position="489"/>
    </location>
</feature>
<feature type="transmembrane region" description="Helical" evidence="1">
    <location>
        <begin position="562"/>
        <end position="582"/>
    </location>
</feature>
<feature type="region of interest" description="Disordered" evidence="2">
    <location>
        <begin position="624"/>
        <end position="673"/>
    </location>
</feature>
<feature type="compositionally biased region" description="Basic and acidic residues" evidence="2">
    <location>
        <begin position="642"/>
        <end position="653"/>
    </location>
</feature>
<feature type="compositionally biased region" description="Low complexity" evidence="2">
    <location>
        <begin position="654"/>
        <end position="673"/>
    </location>
</feature>
<sequence length="673" mass="72870">MKIHNIIKIIIVVCLEGFALTSFAGFGDSCASLPTTTDGYLESDTAYGYIIRSIDMKAPGGNCDANKPGITFCFKNKDGSSDPCTMYTLNQGDSKKISDLSKDNNPDLGANPILKNIVLTVQTWQNDICLLMPTSRGPMPVACKALSNPPAPPSVPSCSNIGQSCYTGANYSQSLINFSGLAVQCLKETLDKIFFVGNSCGSQSQSSEITNLTAFPTFQGYLKNAIGAALILYVMFFAFNMVLNKEYGNPDKIALFVIKLLFVTYFSIGLGPLNFNSSQPTQENGMLKYGLPLLTGIAPEFAQIIFNAAGSKGLCVFDTSKYQSGYQFYALWDSIDCRIGYYLGLDLLYNIDKNGVLSSFARGDGGNSSGSIPIPNLGNPDKNSPNALTSVGSLRFFTVMFGFFMAGNVIILISGLVFAVIFLSILLYFITHYLVCMITIYVMTYVSPIFIPMMLFNRTKGYFDGWLKVSLSCALQPAVVAGFIALLITMYDSAIFKNCEFLRYDYEKNNVKFSTFELRLPASSAEVCQESFGYKMLNYYAGKGWEEHLVILFPIKSIAKDVVSILAELLCVLVFSVIFYYFSKSISQFAADLTNGPKMDAVTASPTKIVDLVKQGAAFIKDAAQATQGKPPSSGDMPGDGGSKRSEGQKGDDSFISSGGNSSGDSLSSSGGK</sequence>
<proteinExistence type="inferred from homology"/>